<comment type="function">
    <text evidence="1">Required for maturation of urease via the functional incorporation of the urease nickel metallocenter.</text>
</comment>
<comment type="subunit">
    <text evidence="1">UreH, UreF and UreG form a complex that acts as a GTP-hydrolysis-dependent molecular chaperone, activating the urease apoprotein by helping to assemble the nickel containing metallocenter of UreC. The UreE protein probably delivers the nickel.</text>
</comment>
<comment type="subcellular location">
    <subcellularLocation>
        <location evidence="1">Cytoplasm</location>
    </subcellularLocation>
</comment>
<comment type="similarity">
    <text evidence="1">Belongs to the UreD family.</text>
</comment>
<organism>
    <name type="scientific">Helicobacter pylori (strain P12)</name>
    <dbReference type="NCBI Taxonomy" id="570508"/>
    <lineage>
        <taxon>Bacteria</taxon>
        <taxon>Pseudomonadati</taxon>
        <taxon>Campylobacterota</taxon>
        <taxon>Epsilonproteobacteria</taxon>
        <taxon>Campylobacterales</taxon>
        <taxon>Helicobacteraceae</taxon>
        <taxon>Helicobacter</taxon>
    </lineage>
</organism>
<evidence type="ECO:0000255" key="1">
    <source>
        <dbReference type="HAMAP-Rule" id="MF_01384"/>
    </source>
</evidence>
<accession>B6JPH0</accession>
<protein>
    <recommendedName>
        <fullName evidence="1">Urease accessory protein UreH</fullName>
    </recommendedName>
</protein>
<name>UREH_HELP2</name>
<gene>
    <name evidence="1" type="primary">ureH</name>
    <name type="ordered locus">HPP12_0071</name>
</gene>
<proteinExistence type="inferred from homology"/>
<reference key="1">
    <citation type="submission" date="2008-10" db="EMBL/GenBank/DDBJ databases">
        <title>The complete genome sequence of Helicobacter pylori strain P12.</title>
        <authorList>
            <person name="Fischer W."/>
            <person name="Windhager L."/>
            <person name="Karnholz A."/>
            <person name="Zeiller M."/>
            <person name="Zimmer R."/>
            <person name="Haas R."/>
        </authorList>
    </citation>
    <scope>NUCLEOTIDE SEQUENCE [LARGE SCALE GENOMIC DNA]</scope>
    <source>
        <strain>P12</strain>
    </source>
</reference>
<feature type="chain" id="PRO_1000145092" description="Urease accessory protein UreH">
    <location>
        <begin position="1"/>
        <end position="265"/>
    </location>
</feature>
<keyword id="KW-0143">Chaperone</keyword>
<keyword id="KW-0963">Cytoplasm</keyword>
<keyword id="KW-0996">Nickel insertion</keyword>
<dbReference type="EMBL" id="CP001217">
    <property type="protein sequence ID" value="ACJ07231.1"/>
    <property type="molecule type" value="Genomic_DNA"/>
</dbReference>
<dbReference type="SMR" id="B6JPH0"/>
<dbReference type="KEGG" id="hpp:HPP12_0071"/>
<dbReference type="HOGENOM" id="CLU_056339_6_1_7"/>
<dbReference type="Proteomes" id="UP000008198">
    <property type="component" value="Chromosome"/>
</dbReference>
<dbReference type="GO" id="GO:0005737">
    <property type="term" value="C:cytoplasm"/>
    <property type="evidence" value="ECO:0007669"/>
    <property type="project" value="UniProtKB-SubCell"/>
</dbReference>
<dbReference type="GO" id="GO:0016151">
    <property type="term" value="F:nickel cation binding"/>
    <property type="evidence" value="ECO:0007669"/>
    <property type="project" value="InterPro"/>
</dbReference>
<dbReference type="HAMAP" id="MF_01384">
    <property type="entry name" value="UreD"/>
    <property type="match status" value="1"/>
</dbReference>
<dbReference type="InterPro" id="IPR002669">
    <property type="entry name" value="UreD"/>
</dbReference>
<dbReference type="PANTHER" id="PTHR33643">
    <property type="entry name" value="UREASE ACCESSORY PROTEIN D"/>
    <property type="match status" value="1"/>
</dbReference>
<dbReference type="PANTHER" id="PTHR33643:SF1">
    <property type="entry name" value="UREASE ACCESSORY PROTEIN D"/>
    <property type="match status" value="1"/>
</dbReference>
<dbReference type="Pfam" id="PF01774">
    <property type="entry name" value="UreD"/>
    <property type="match status" value="1"/>
</dbReference>
<sequence>MNTYAQESKLRLKTKIGADGRCVIEDNFFTPPFKLMAPFYPKDDLAEIMLLAVSPGLMKGDAQDMQLSIGQNCKLRITSQSFEKIHNTEDGFASRDMHIVVGENAFLDFAPFPLIPFENAHFKGNTTISLRSSSQLLYSEIIVAGRVARNELFKFNRLHTKISILQDEKPIYYDNTILDPKTTDMNNMCMFDGYTHYLNLVLVNCPIELSGVRGLIEESEGVDGAVSEIASSHLCVKALAKGSEPLLHLREKIARFTTQTITQKV</sequence>